<gene>
    <name evidence="1" type="primary">ispDF</name>
    <name type="ordered locus">bll4485</name>
</gene>
<name>ISPDF_BRADU</name>
<sequence length="398" mass="42226">MAKSQRTAVVLVAAGRGLRAGAGGPKQYREIGGQPVIYRAMEAFSRHPDVFAVQPVVNPDDSAMFTAAVAGLKHEPPTNGGATRQASVLAGLEALAKHQPDIVLIHDAARPFVSDGVISRAIDAASRTGAAIPVVPVTDTIKLTGASGNVEDTPDRARLRIAQTPQSFRFDVILEAHRRAAKDGRSDFTDDAAIAEWAGLTVATFEGDVANMKLTTPEDFVREEARLAAQLGDIRTGTGYDVHAFGEGDHVMICGVRVPHSKGFLAHSDGDVGLHALVDAILGALADGDIGSHFPPSDAKWKGASSDQFLKYAIERVAQRGGRVANLEVTMICERPKIGPLRDTMRARIAEISGVDISRVAVKATTSERLGFTGREEGIAATASATIRLPFNEKTWSV</sequence>
<protein>
    <recommendedName>
        <fullName evidence="1">Bifunctional enzyme IspD/IspF</fullName>
    </recommendedName>
    <domain>
        <recommendedName>
            <fullName evidence="1">2-C-methyl-D-erythritol 4-phosphate cytidylyltransferase</fullName>
            <ecNumber evidence="1">2.7.7.60</ecNumber>
        </recommendedName>
        <alternativeName>
            <fullName evidence="1">4-diphosphocytidyl-2C-methyl-D-erythritol synthase</fullName>
        </alternativeName>
        <alternativeName>
            <fullName evidence="1">MEP cytidylyltransferase</fullName>
            <shortName evidence="1">MCT</shortName>
        </alternativeName>
    </domain>
    <domain>
        <recommendedName>
            <fullName evidence="1">2-C-methyl-D-erythritol 2,4-cyclodiphosphate synthase</fullName>
            <shortName evidence="1">MECDP-synthase</shortName>
            <shortName evidence="1">MECPP-synthase</shortName>
            <shortName evidence="1">MECPS</shortName>
            <ecNumber evidence="1">4.6.1.12</ecNumber>
        </recommendedName>
    </domain>
</protein>
<dbReference type="EC" id="2.7.7.60" evidence="1"/>
<dbReference type="EC" id="4.6.1.12" evidence="1"/>
<dbReference type="EMBL" id="BA000040">
    <property type="protein sequence ID" value="BAC49750.1"/>
    <property type="molecule type" value="Genomic_DNA"/>
</dbReference>
<dbReference type="RefSeq" id="NP_771125.1">
    <property type="nucleotide sequence ID" value="NC_004463.1"/>
</dbReference>
<dbReference type="RefSeq" id="WP_011087257.1">
    <property type="nucleotide sequence ID" value="NC_004463.1"/>
</dbReference>
<dbReference type="SMR" id="Q89LQ8"/>
<dbReference type="FunCoup" id="Q89LQ8">
    <property type="interactions" value="559"/>
</dbReference>
<dbReference type="STRING" id="224911.AAV28_19600"/>
<dbReference type="EnsemblBacteria" id="BAC49750">
    <property type="protein sequence ID" value="BAC49750"/>
    <property type="gene ID" value="BAC49750"/>
</dbReference>
<dbReference type="GeneID" id="46491491"/>
<dbReference type="KEGG" id="bja:bll4485"/>
<dbReference type="PATRIC" id="fig|224911.44.peg.4260"/>
<dbReference type="eggNOG" id="COG0245">
    <property type="taxonomic scope" value="Bacteria"/>
</dbReference>
<dbReference type="eggNOG" id="COG1211">
    <property type="taxonomic scope" value="Bacteria"/>
</dbReference>
<dbReference type="HOGENOM" id="CLU_042800_2_3_5"/>
<dbReference type="InParanoid" id="Q89LQ8"/>
<dbReference type="OrthoDB" id="9804336at2"/>
<dbReference type="PhylomeDB" id="Q89LQ8"/>
<dbReference type="UniPathway" id="UPA00056">
    <property type="reaction ID" value="UER00093"/>
</dbReference>
<dbReference type="UniPathway" id="UPA00056">
    <property type="reaction ID" value="UER00095"/>
</dbReference>
<dbReference type="Proteomes" id="UP000002526">
    <property type="component" value="Chromosome"/>
</dbReference>
<dbReference type="GO" id="GO:0008685">
    <property type="term" value="F:2-C-methyl-D-erythritol 2,4-cyclodiphosphate synthase activity"/>
    <property type="evidence" value="ECO:0000318"/>
    <property type="project" value="GO_Central"/>
</dbReference>
<dbReference type="GO" id="GO:0050518">
    <property type="term" value="F:2-C-methyl-D-erythritol 4-phosphate cytidylyltransferase activity"/>
    <property type="evidence" value="ECO:0007669"/>
    <property type="project" value="UniProtKB-UniRule"/>
</dbReference>
<dbReference type="GO" id="GO:0046872">
    <property type="term" value="F:metal ion binding"/>
    <property type="evidence" value="ECO:0007669"/>
    <property type="project" value="UniProtKB-KW"/>
</dbReference>
<dbReference type="GO" id="GO:0019288">
    <property type="term" value="P:isopentenyl diphosphate biosynthetic process, methylerythritol 4-phosphate pathway"/>
    <property type="evidence" value="ECO:0007669"/>
    <property type="project" value="UniProtKB-UniRule"/>
</dbReference>
<dbReference type="GO" id="GO:0016114">
    <property type="term" value="P:terpenoid biosynthetic process"/>
    <property type="evidence" value="ECO:0007669"/>
    <property type="project" value="InterPro"/>
</dbReference>
<dbReference type="CDD" id="cd02516">
    <property type="entry name" value="CDP-ME_synthetase"/>
    <property type="match status" value="1"/>
</dbReference>
<dbReference type="CDD" id="cd00554">
    <property type="entry name" value="MECDP_synthase"/>
    <property type="match status" value="1"/>
</dbReference>
<dbReference type="FunFam" id="3.90.550.10:FF:000003">
    <property type="entry name" value="2-C-methyl-D-erythritol 4-phosphate cytidylyltransferase"/>
    <property type="match status" value="1"/>
</dbReference>
<dbReference type="FunFam" id="3.30.1330.50:FF:000008">
    <property type="entry name" value="Bifunctional enzyme IspD/IspF"/>
    <property type="match status" value="1"/>
</dbReference>
<dbReference type="Gene3D" id="3.30.1330.50">
    <property type="entry name" value="2-C-methyl-D-erythritol 2,4-cyclodiphosphate synthase"/>
    <property type="match status" value="1"/>
</dbReference>
<dbReference type="Gene3D" id="3.90.550.10">
    <property type="entry name" value="Spore Coat Polysaccharide Biosynthesis Protein SpsA, Chain A"/>
    <property type="match status" value="1"/>
</dbReference>
<dbReference type="HAMAP" id="MF_00108">
    <property type="entry name" value="IspD"/>
    <property type="match status" value="1"/>
</dbReference>
<dbReference type="HAMAP" id="MF_01520">
    <property type="entry name" value="IspDF"/>
    <property type="match status" value="1"/>
</dbReference>
<dbReference type="HAMAP" id="MF_00107">
    <property type="entry name" value="IspF"/>
    <property type="match status" value="1"/>
</dbReference>
<dbReference type="InterPro" id="IPR001228">
    <property type="entry name" value="IspD"/>
</dbReference>
<dbReference type="InterPro" id="IPR026596">
    <property type="entry name" value="IspD/F"/>
</dbReference>
<dbReference type="InterPro" id="IPR034683">
    <property type="entry name" value="IspD/TarI"/>
</dbReference>
<dbReference type="InterPro" id="IPR018294">
    <property type="entry name" value="ISPD_synthase_CS"/>
</dbReference>
<dbReference type="InterPro" id="IPR003526">
    <property type="entry name" value="MECDP_synthase"/>
</dbReference>
<dbReference type="InterPro" id="IPR020555">
    <property type="entry name" value="MECDP_synthase_CS"/>
</dbReference>
<dbReference type="InterPro" id="IPR036571">
    <property type="entry name" value="MECDP_synthase_sf"/>
</dbReference>
<dbReference type="InterPro" id="IPR029044">
    <property type="entry name" value="Nucleotide-diphossugar_trans"/>
</dbReference>
<dbReference type="NCBIfam" id="TIGR00453">
    <property type="entry name" value="ispD"/>
    <property type="match status" value="1"/>
</dbReference>
<dbReference type="NCBIfam" id="TIGR00151">
    <property type="entry name" value="ispF"/>
    <property type="match status" value="1"/>
</dbReference>
<dbReference type="NCBIfam" id="NF006899">
    <property type="entry name" value="PRK09382.1"/>
    <property type="match status" value="1"/>
</dbReference>
<dbReference type="PANTHER" id="PTHR43181">
    <property type="entry name" value="2-C-METHYL-D-ERYTHRITOL 2,4-CYCLODIPHOSPHATE SYNTHASE, CHLOROPLASTIC"/>
    <property type="match status" value="1"/>
</dbReference>
<dbReference type="PANTHER" id="PTHR43181:SF1">
    <property type="entry name" value="2-C-METHYL-D-ERYTHRITOL 2,4-CYCLODIPHOSPHATE SYNTHASE, CHLOROPLASTIC"/>
    <property type="match status" value="1"/>
</dbReference>
<dbReference type="Pfam" id="PF01128">
    <property type="entry name" value="IspD"/>
    <property type="match status" value="1"/>
</dbReference>
<dbReference type="Pfam" id="PF02542">
    <property type="entry name" value="YgbB"/>
    <property type="match status" value="1"/>
</dbReference>
<dbReference type="SUPFAM" id="SSF69765">
    <property type="entry name" value="IpsF-like"/>
    <property type="match status" value="1"/>
</dbReference>
<dbReference type="SUPFAM" id="SSF53448">
    <property type="entry name" value="Nucleotide-diphospho-sugar transferases"/>
    <property type="match status" value="1"/>
</dbReference>
<dbReference type="PROSITE" id="PS01295">
    <property type="entry name" value="ISPD"/>
    <property type="match status" value="1"/>
</dbReference>
<dbReference type="PROSITE" id="PS01350">
    <property type="entry name" value="ISPF"/>
    <property type="match status" value="1"/>
</dbReference>
<comment type="function">
    <text evidence="1">Bifunctional enzyme that catalyzes the formation of 4-diphosphocytidyl-2-C-methyl-D-erythritol from CTP and 2-C-methyl-D-erythritol 4-phosphate (MEP) (IspD), and catalyzes the conversion of 4-diphosphocytidyl-2-C-methyl-D-erythritol 2-phosphate (CDP-ME2P) to 2-C-methyl-D-erythritol 2,4-cyclodiphosphate (ME-CPP) with a corresponding release of cytidine 5-monophosphate (CMP) (IspF).</text>
</comment>
<comment type="catalytic activity">
    <reaction evidence="1">
        <text>2-C-methyl-D-erythritol 4-phosphate + CTP + H(+) = 4-CDP-2-C-methyl-D-erythritol + diphosphate</text>
        <dbReference type="Rhea" id="RHEA:13429"/>
        <dbReference type="ChEBI" id="CHEBI:15378"/>
        <dbReference type="ChEBI" id="CHEBI:33019"/>
        <dbReference type="ChEBI" id="CHEBI:37563"/>
        <dbReference type="ChEBI" id="CHEBI:57823"/>
        <dbReference type="ChEBI" id="CHEBI:58262"/>
        <dbReference type="EC" id="2.7.7.60"/>
    </reaction>
</comment>
<comment type="catalytic activity">
    <reaction evidence="1">
        <text>4-CDP-2-C-methyl-D-erythritol 2-phosphate = 2-C-methyl-D-erythritol 2,4-cyclic diphosphate + CMP</text>
        <dbReference type="Rhea" id="RHEA:23864"/>
        <dbReference type="ChEBI" id="CHEBI:57919"/>
        <dbReference type="ChEBI" id="CHEBI:58483"/>
        <dbReference type="ChEBI" id="CHEBI:60377"/>
        <dbReference type="EC" id="4.6.1.12"/>
    </reaction>
</comment>
<comment type="cofactor">
    <cofactor evidence="1">
        <name>a divalent metal cation</name>
        <dbReference type="ChEBI" id="CHEBI:60240"/>
    </cofactor>
</comment>
<comment type="pathway">
    <text evidence="1">Isoprenoid biosynthesis; isopentenyl diphosphate biosynthesis via DXP pathway; isopentenyl diphosphate from 1-deoxy-D-xylulose 5-phosphate: step 2/6.</text>
</comment>
<comment type="pathway">
    <text evidence="1">Isoprenoid biosynthesis; isopentenyl diphosphate biosynthesis via DXP pathway; isopentenyl diphosphate from 1-deoxy-D-xylulose 5-phosphate: step 4/6.</text>
</comment>
<comment type="similarity">
    <text evidence="1">In the N-terminal section; belongs to the IspD/TarI cytidylyltransferase family. IspD subfamily.</text>
</comment>
<comment type="similarity">
    <text evidence="1">In the C-terminal section; belongs to the IspF family.</text>
</comment>
<feature type="chain" id="PRO_0000075658" description="Bifunctional enzyme IspD/IspF">
    <location>
        <begin position="1"/>
        <end position="398"/>
    </location>
</feature>
<feature type="region of interest" description="2-C-methyl-D-erythritol 4-phosphate cytidylyltransferase" evidence="1">
    <location>
        <begin position="1"/>
        <end position="234"/>
    </location>
</feature>
<feature type="region of interest" description="2-C-methyl-D-erythritol 2,4-cyclodiphosphate synthase" evidence="1">
    <location>
        <begin position="235"/>
        <end position="398"/>
    </location>
</feature>
<feature type="binding site" evidence="1">
    <location>
        <begin position="241"/>
        <end position="243"/>
    </location>
    <ligand>
        <name>4-CDP-2-C-methyl-D-erythritol 2-phosphate</name>
        <dbReference type="ChEBI" id="CHEBI:57919"/>
    </ligand>
</feature>
<feature type="binding site" evidence="1">
    <location>
        <position position="241"/>
    </location>
    <ligand>
        <name>a divalent metal cation</name>
        <dbReference type="ChEBI" id="CHEBI:60240"/>
    </ligand>
</feature>
<feature type="binding site" evidence="1">
    <location>
        <position position="243"/>
    </location>
    <ligand>
        <name>a divalent metal cation</name>
        <dbReference type="ChEBI" id="CHEBI:60240"/>
    </ligand>
</feature>
<feature type="binding site" evidence="1">
    <location>
        <begin position="267"/>
        <end position="268"/>
    </location>
    <ligand>
        <name>4-CDP-2-C-methyl-D-erythritol 2-phosphate</name>
        <dbReference type="ChEBI" id="CHEBI:57919"/>
    </ligand>
</feature>
<feature type="binding site" evidence="1">
    <location>
        <position position="275"/>
    </location>
    <ligand>
        <name>a divalent metal cation</name>
        <dbReference type="ChEBI" id="CHEBI:60240"/>
    </ligand>
</feature>
<feature type="binding site" evidence="1">
    <location>
        <begin position="289"/>
        <end position="291"/>
    </location>
    <ligand>
        <name>4-CDP-2-C-methyl-D-erythritol 2-phosphate</name>
        <dbReference type="ChEBI" id="CHEBI:57919"/>
    </ligand>
</feature>
<feature type="binding site" evidence="1">
    <location>
        <begin position="365"/>
        <end position="368"/>
    </location>
    <ligand>
        <name>4-CDP-2-C-methyl-D-erythritol 2-phosphate</name>
        <dbReference type="ChEBI" id="CHEBI:57919"/>
    </ligand>
</feature>
<feature type="binding site" evidence="1">
    <location>
        <position position="372"/>
    </location>
    <ligand>
        <name>4-CDP-2-C-methyl-D-erythritol 2-phosphate</name>
        <dbReference type="ChEBI" id="CHEBI:57919"/>
    </ligand>
</feature>
<feature type="binding site" evidence="1">
    <location>
        <position position="375"/>
    </location>
    <ligand>
        <name>4-CDP-2-C-methyl-D-erythritol 2-phosphate</name>
        <dbReference type="ChEBI" id="CHEBI:57919"/>
    </ligand>
</feature>
<feature type="site" description="Transition state stabilizer" evidence="1">
    <location>
        <position position="19"/>
    </location>
</feature>
<feature type="site" description="Transition state stabilizer" evidence="1">
    <location>
        <position position="26"/>
    </location>
</feature>
<feature type="site" description="Positions MEP for the nucleophilic attack" evidence="1">
    <location>
        <position position="156"/>
    </location>
</feature>
<feature type="site" description="Positions MEP for the nucleophilic attack" evidence="1">
    <location>
        <position position="213"/>
    </location>
</feature>
<feature type="site" description="Transition state stabilizer" evidence="1">
    <location>
        <position position="267"/>
    </location>
</feature>
<feature type="site" description="Transition state stabilizer" evidence="1">
    <location>
        <position position="366"/>
    </location>
</feature>
<evidence type="ECO:0000255" key="1">
    <source>
        <dbReference type="HAMAP-Rule" id="MF_01520"/>
    </source>
</evidence>
<organism>
    <name type="scientific">Bradyrhizobium diazoefficiens (strain JCM 10833 / BCRC 13528 / IAM 13628 / NBRC 14792 / USDA 110)</name>
    <dbReference type="NCBI Taxonomy" id="224911"/>
    <lineage>
        <taxon>Bacteria</taxon>
        <taxon>Pseudomonadati</taxon>
        <taxon>Pseudomonadota</taxon>
        <taxon>Alphaproteobacteria</taxon>
        <taxon>Hyphomicrobiales</taxon>
        <taxon>Nitrobacteraceae</taxon>
        <taxon>Bradyrhizobium</taxon>
    </lineage>
</organism>
<proteinExistence type="inferred from homology"/>
<reference key="1">
    <citation type="journal article" date="2002" name="DNA Res.">
        <title>Complete genomic sequence of nitrogen-fixing symbiotic bacterium Bradyrhizobium japonicum USDA110.</title>
        <authorList>
            <person name="Kaneko T."/>
            <person name="Nakamura Y."/>
            <person name="Sato S."/>
            <person name="Minamisawa K."/>
            <person name="Uchiumi T."/>
            <person name="Sasamoto S."/>
            <person name="Watanabe A."/>
            <person name="Idesawa K."/>
            <person name="Iriguchi M."/>
            <person name="Kawashima K."/>
            <person name="Kohara M."/>
            <person name="Matsumoto M."/>
            <person name="Shimpo S."/>
            <person name="Tsuruoka H."/>
            <person name="Wada T."/>
            <person name="Yamada M."/>
            <person name="Tabata S."/>
        </authorList>
    </citation>
    <scope>NUCLEOTIDE SEQUENCE [LARGE SCALE GENOMIC DNA]</scope>
    <source>
        <strain>JCM 10833 / BCRC 13528 / IAM 13628 / NBRC 14792 / USDA 110</strain>
    </source>
</reference>
<accession>Q89LQ8</accession>
<keyword id="KW-0414">Isoprene biosynthesis</keyword>
<keyword id="KW-0456">Lyase</keyword>
<keyword id="KW-0479">Metal-binding</keyword>
<keyword id="KW-0511">Multifunctional enzyme</keyword>
<keyword id="KW-0548">Nucleotidyltransferase</keyword>
<keyword id="KW-1185">Reference proteome</keyword>
<keyword id="KW-0808">Transferase</keyword>